<feature type="chain" id="PRO_0000453031" description="Kappa-lycotoxin-Os1a" evidence="1">
    <location>
        <begin position="1"/>
        <end position="64"/>
    </location>
</feature>
<feature type="disulfide bond" evidence="4">
    <location>
        <begin position="10"/>
        <end position="26"/>
    </location>
</feature>
<feature type="disulfide bond" evidence="4">
    <location>
        <begin position="17"/>
        <end position="56"/>
    </location>
</feature>
<feature type="disulfide bond" evidence="4">
    <location>
        <begin position="19"/>
        <end position="42"/>
    </location>
</feature>
<feature type="disulfide bond" evidence="4">
    <location>
        <begin position="28"/>
        <end position="40"/>
    </location>
</feature>
<feature type="unsure residue" description="Assigned by comparison with orthologs and mass difference" evidence="4">
    <location>
        <position position="53"/>
    </location>
</feature>
<sequence length="64" mass="7486">RLALPPGAVCNGHKSDCQCFGAKYKCSCPFFWRFRKSAECHCKKGWAWTAIKKRSCHNRYQWSD</sequence>
<proteinExistence type="evidence at protein level"/>
<dbReference type="SMR" id="C0HLR8"/>
<dbReference type="GO" id="GO:0005576">
    <property type="term" value="C:extracellular region"/>
    <property type="evidence" value="ECO:0007669"/>
    <property type="project" value="UniProtKB-SubCell"/>
</dbReference>
<dbReference type="GO" id="GO:0015459">
    <property type="term" value="F:potassium channel regulator activity"/>
    <property type="evidence" value="ECO:0007669"/>
    <property type="project" value="UniProtKB-KW"/>
</dbReference>
<dbReference type="GO" id="GO:0090729">
    <property type="term" value="F:toxin activity"/>
    <property type="evidence" value="ECO:0007669"/>
    <property type="project" value="UniProtKB-KW"/>
</dbReference>
<dbReference type="InterPro" id="IPR013605">
    <property type="entry name" value="Toxin_34"/>
</dbReference>
<dbReference type="Pfam" id="PF08396">
    <property type="entry name" value="Toxin_34"/>
    <property type="match status" value="1"/>
</dbReference>
<organism>
    <name type="scientific">Oculicosa supermirabilis</name>
    <name type="common">Central Asian wolf-spider</name>
    <dbReference type="NCBI Taxonomy" id="2739307"/>
    <lineage>
        <taxon>Eukaryota</taxon>
        <taxon>Metazoa</taxon>
        <taxon>Ecdysozoa</taxon>
        <taxon>Arthropoda</taxon>
        <taxon>Chelicerata</taxon>
        <taxon>Arachnida</taxon>
        <taxon>Araneae</taxon>
        <taxon>Araneomorphae</taxon>
        <taxon>Entelegynae</taxon>
        <taxon>Lycosoidea</taxon>
        <taxon>Lycosidae</taxon>
        <taxon>Oculicosa</taxon>
    </lineage>
</organism>
<reference key="1">
    <citation type="journal article" date="2020" name="Front. Pharmacol.">
        <title>A novel insecticidal spider peptide that affects the mammalian voltage-gated ion channel hKv1.5.</title>
        <authorList>
            <person name="Alvarado D."/>
            <person name="Cardoso-Arenas S."/>
            <person name="Corrales-Garcia L.L."/>
            <person name="Clement H."/>
            <person name="Arenas I."/>
            <person name="Montero-Dominguez P.A."/>
            <person name="Olamendi-Portugal T."/>
            <person name="Zamudio F."/>
            <person name="Csoti A."/>
            <person name="Borrego J."/>
            <person name="Panyi G."/>
            <person name="Papp F."/>
            <person name="Corzo G."/>
        </authorList>
    </citation>
    <scope>PROTEIN SEQUENCE</scope>
    <scope>FUNCTION</scope>
    <scope>SUBCELLULAR LOCATION</scope>
    <scope>MASS SPECTROMETRY</scope>
    <scope>RECOMBINANT EXPRESSION</scope>
    <scope>PROBABLE DISULFIDE BONDS</scope>
    <scope>3D-STRUCTURE MODELING</scope>
    <scope>TOXIC DOSE</scope>
    <source>
        <tissue>Venom</tissue>
    </source>
</reference>
<keyword id="KW-0903">Direct protein sequencing</keyword>
<keyword id="KW-1015">Disulfide bond</keyword>
<keyword id="KW-0872">Ion channel impairing toxin</keyword>
<keyword id="KW-0528">Neurotoxin</keyword>
<keyword id="KW-0632">Potassium channel impairing toxin</keyword>
<keyword id="KW-0964">Secreted</keyword>
<keyword id="KW-0800">Toxin</keyword>
<keyword id="KW-1220">Voltage-gated potassium channel impairing toxin</keyword>
<name>TX1_OCUSU</name>
<accession>C0HLR8</accession>
<protein>
    <recommendedName>
        <fullName evidence="3">Kappa-lycotoxin-Os1a</fullName>
        <shortName evidence="3">Kappa-LCTX-Os1a</shortName>
    </recommendedName>
    <alternativeName>
        <fullName evidence="2">Toxin Osu1</fullName>
    </alternativeName>
</protein>
<comment type="function">
    <text evidence="1">Insecticidal to house crickets (PubMed:33597864). It induces an excitatory slow-onset impact that leads to irreversible spastic paralysis (PubMed:33597864). It also modifies human voltage-gated potassium channel Kv1.5/KCNA5 (PubMed:33597864). Most likely, it binds to the voltage-sensing domain of the channel, suggesting it does not block the pore but prevents its opening at physiological membrane potentials (PubMed:33597864). The recombinant peptide binds to the channel in an irreversible manner and slows down the hKv1.5 current activation kinetics (PubMed:33597864). It is not toxic to mice, when intracranially injected (at 0.5 ug/g mouse) (PubMed:33597864).</text>
</comment>
<comment type="subcellular location">
    <subcellularLocation>
        <location evidence="1">Secreted</location>
    </subcellularLocation>
</comment>
<comment type="tissue specificity">
    <text evidence="4">Expressed by the venom gland.</text>
</comment>
<comment type="mass spectrometry" mass="7477.4" method="Electrospray" evidence="1"/>
<comment type="toxic dose">
    <text evidence="1">PD(50) is 0.05 ug/g (6.6 pmol/g) in house crickets (Acheta domesticus).</text>
</comment>
<comment type="toxic dose">
    <text evidence="1">LD(50) is &lt;0.1 ug/g (&lt;13.3 pmol/g) in house crickets (Acheta domesticus).</text>
</comment>
<comment type="miscellaneous">
    <text evidence="1">This toxin represents a concentration of ~60 ug per mg of O.supermirabilis dry crude venom.</text>
</comment>
<comment type="similarity">
    <text evidence="3">Belongs to the neurotoxin 04 (omega-agtx) family. 01 (type I omega-agtx) subfamily.</text>
</comment>
<evidence type="ECO:0000269" key="1">
    <source>
    </source>
</evidence>
<evidence type="ECO:0000303" key="2">
    <source>
    </source>
</evidence>
<evidence type="ECO:0000305" key="3"/>
<evidence type="ECO:0000305" key="4">
    <source>
    </source>
</evidence>